<accession>P03010</accession>
<comment type="miscellaneous">
    <text>This protein is coded by the transposable maize controlling element 'activator' (Ac), which is able to activate chromosome breakage at a specific location; it may be the structural gene for a trans-acting function required for transposition.</text>
</comment>
<dbReference type="EMBL" id="K01964">
    <property type="status" value="NOT_ANNOTATED_CDS"/>
    <property type="molecule type" value="Genomic_DNA"/>
</dbReference>
<dbReference type="PIR" id="A03540">
    <property type="entry name" value="TQZMCA"/>
</dbReference>
<dbReference type="FunCoup" id="P03010">
    <property type="interactions" value="797"/>
</dbReference>
<dbReference type="STRING" id="4577.P03010"/>
<dbReference type="MaizeGDB" id="65747"/>
<dbReference type="InParanoid" id="P03010"/>
<dbReference type="Proteomes" id="UP000007305">
    <property type="component" value="Unplaced"/>
</dbReference>
<dbReference type="GO" id="GO:0003677">
    <property type="term" value="F:DNA binding"/>
    <property type="evidence" value="ECO:0007669"/>
    <property type="project" value="UniProtKB-KW"/>
</dbReference>
<dbReference type="GO" id="GO:0046983">
    <property type="term" value="F:protein dimerization activity"/>
    <property type="evidence" value="ECO:0007669"/>
    <property type="project" value="InterPro"/>
</dbReference>
<dbReference type="GO" id="GO:0006310">
    <property type="term" value="P:DNA recombination"/>
    <property type="evidence" value="ECO:0007669"/>
    <property type="project" value="UniProtKB-KW"/>
</dbReference>
<dbReference type="GO" id="GO:0032196">
    <property type="term" value="P:transposition"/>
    <property type="evidence" value="ECO:0007669"/>
    <property type="project" value="UniProtKB-KW"/>
</dbReference>
<dbReference type="InterPro" id="IPR025525">
    <property type="entry name" value="hAT-like_transposase_RNase-H"/>
</dbReference>
<dbReference type="InterPro" id="IPR008906">
    <property type="entry name" value="HATC_C_dom"/>
</dbReference>
<dbReference type="InterPro" id="IPR012337">
    <property type="entry name" value="RNaseH-like_sf"/>
</dbReference>
<dbReference type="InterPro" id="IPR052035">
    <property type="entry name" value="ZnF_BED_domain_contain"/>
</dbReference>
<dbReference type="PANTHER" id="PTHR46481">
    <property type="entry name" value="ZINC FINGER BED DOMAIN-CONTAINING PROTEIN 4"/>
    <property type="match status" value="1"/>
</dbReference>
<dbReference type="PANTHER" id="PTHR46481:SF11">
    <property type="entry name" value="ZINC FINGER BED DOMAIN-CONTAINING PROTEIN RICESLEEPER 2-LIKE"/>
    <property type="match status" value="1"/>
</dbReference>
<dbReference type="Pfam" id="PF05699">
    <property type="entry name" value="Dimer_Tnp_hAT"/>
    <property type="match status" value="1"/>
</dbReference>
<dbReference type="Pfam" id="PF14372">
    <property type="entry name" value="hAT-like_RNase-H"/>
    <property type="match status" value="1"/>
</dbReference>
<dbReference type="SMART" id="SM00614">
    <property type="entry name" value="ZnF_BED"/>
    <property type="match status" value="1"/>
</dbReference>
<dbReference type="SUPFAM" id="SSF53098">
    <property type="entry name" value="Ribonuclease H-like"/>
    <property type="match status" value="1"/>
</dbReference>
<name>TRAC9_MAIZE</name>
<keyword id="KW-0233">DNA recombination</keyword>
<keyword id="KW-0238">DNA-binding</keyword>
<keyword id="KW-1185">Reference proteome</keyword>
<keyword id="KW-0814">Transposable element</keyword>
<keyword id="KW-0815">Transposition</keyword>
<protein>
    <recommendedName>
        <fullName>Putative AC9 transposase</fullName>
    </recommendedName>
</protein>
<organism>
    <name type="scientific">Zea mays</name>
    <name type="common">Maize</name>
    <dbReference type="NCBI Taxonomy" id="4577"/>
    <lineage>
        <taxon>Eukaryota</taxon>
        <taxon>Viridiplantae</taxon>
        <taxon>Streptophyta</taxon>
        <taxon>Embryophyta</taxon>
        <taxon>Tracheophyta</taxon>
        <taxon>Spermatophyta</taxon>
        <taxon>Magnoliopsida</taxon>
        <taxon>Liliopsida</taxon>
        <taxon>Poales</taxon>
        <taxon>Poaceae</taxon>
        <taxon>PACMAD clade</taxon>
        <taxon>Panicoideae</taxon>
        <taxon>Andropogonodae</taxon>
        <taxon>Andropogoneae</taxon>
        <taxon>Tripsacinae</taxon>
        <taxon>Zea</taxon>
    </lineage>
</organism>
<evidence type="ECO:0000256" key="1">
    <source>
        <dbReference type="SAM" id="MobiDB-lite"/>
    </source>
</evidence>
<feature type="chain" id="PRO_0000065598" description="Putative AC9 transposase">
    <location>
        <begin position="1"/>
        <end position="839"/>
    </location>
</feature>
<feature type="region of interest" description="Disordered" evidence="1">
    <location>
        <begin position="32"/>
        <end position="85"/>
    </location>
</feature>
<feature type="compositionally biased region" description="Polar residues" evidence="1">
    <location>
        <begin position="32"/>
        <end position="43"/>
    </location>
</feature>
<feature type="compositionally biased region" description="Pro residues" evidence="1">
    <location>
        <begin position="55"/>
        <end position="70"/>
    </location>
</feature>
<sequence>MYVHVRVGMDVAAHHHHHQQLRRERHFIQSVSSSNANGTATDPSQDDMAIVHEPQPQPQPQPEPQPQPQPEPEEEAPQKRAKKCTSDVWQHFTKKEIEVEVDGKKYVQVWGHCNFPNCKAKYRAEGHHGTSGFRNHLRTSHSLVKGQLCLKSEKDHGKDINLIEPYKYDEVVSLKKLHLAIIMHEYPFNIVEHEYFVEFVKSLRPHFPIKSRVTARKYIMDLYLEEKEKLYGKLKDVQSRFSTTMDMWTSCQNKSYMCVTIHWIDDDWCLQKRIVGFFHVEGRHTGQRLSQTFTAIMVKWNIEKKLFALSLDNASANEVAVHDIIEDLQDTDSNLVCDGAFFHVRCACHILNLVAKDGLAVIAGTIEKIKAIVLAVKSSPLQWEELMKCASECDLDKSKGISYDVSTRWNSTYLMLRDALYYKPALIRLKTSDPRRYVCLNCCTCHHYKFSINQMSIIVGTMQFVLKPRSGRWHLTLFKCLKKFFDLTELLSGTQYSTANLFYKGFCEIKDLIDQWCCHEKFVIRRMAVAMSEKFEKYWKVSNIALAVACFLDPRYKKILIEFYMKKFHGDSYKVHVDDFVRVIRKLYQFYSSCSPSAPKTKTTTNDSMDDTLMENEDDEFQNYLHELKDYDQVESNELDKYMSEPLLKHSGQFDILSWWRGRVAEYPILTQIARDVLAIQVSTVASESAFSAGGRVVDPYRNRLGSEIVEALICTKDWVAASRKGEWHICYNEVPIYSYSTIILLILMHICVIQGATYFPTMIGDLEVLDSVIAAATNHENHMDEVFKDYYLLRAWAINLLLFTTVLMHGLFLSPCFDACALLPSRVILPAWLALTDF</sequence>
<reference key="1">
    <citation type="journal article" date="1984" name="Cell">
        <title>The nucleotide sequence of the maize controlling element Activator.</title>
        <authorList>
            <person name="Pohlman R.F."/>
            <person name="Fedoroff N.V."/>
            <person name="Messing J."/>
        </authorList>
    </citation>
    <scope>NUCLEOTIDE SEQUENCE [GENOMIC DNA]</scope>
</reference>
<proteinExistence type="predicted"/>